<geneLocation type="mitochondrion"/>
<comment type="function">
    <text evidence="1">Subunit a, of the mitochondrial membrane ATP synthase complex (F(1)F(0) ATP synthase or Complex V) that produces ATP from ADP in the presence of a proton gradient across the membrane which is generated by electron transport complexes of the respiratory chain. ATP synthase complex consist of a soluble F(1) head domain - the catalytic core - and a membrane F(1) domain - the membrane proton channel. These two domains are linked by a central stalk rotating inside the F(1) region and a stationary peripheral stalk. During catalysis, ATP synthesis in the catalytic domain of F(1) is coupled via a rotary mechanism of the central stalk subunits to proton translocation. With the subunit c (ATP5MC1), forms the proton-conducting channel in the F(0) domain, that contains two crucial half-channels (inlet and outlet) that facilitate proton movement from the mitochondrial intermembrane space (IMS) into the matrix. Protons are taken up via the inlet half-channel and released through the outlet half-channel, following a Grotthuss mechanism.</text>
</comment>
<comment type="catalytic activity">
    <reaction evidence="1">
        <text>H(+)(in) = H(+)(out)</text>
        <dbReference type="Rhea" id="RHEA:34979"/>
        <dbReference type="ChEBI" id="CHEBI:15378"/>
    </reaction>
</comment>
<comment type="subunit">
    <text evidence="1">Component of the ATP synthase complex composed at least of ATP5F1A/subunit alpha, ATP5F1B/subunit beta, ATP5MC1/subunit c (homooctomer), MT-ATP6/subunit a, MT-ATP8/subunit 8, ATP5ME/subunit e, ATP5MF/subunit f, ATP5MG/subunit g, ATP5MK/subunit k, ATP5MJ/subunit j, ATP5F1C/subunit gamma, ATP5F1D/subunit delta, ATP5F1E/subunit epsilon, ATP5PF/subunit F6, ATP5PB/subunit b, ATP5PD/subunit d, ATP5PO/subunit OSCP. ATP synthase complex consists of a soluble F(1) head domain (subunits alpha(3) and beta(3)) - the catalytic core - and a membrane F(0) domain - the membrane proton channel (subunits c, a, 8, e, f, g, k and j). These two domains are linked by a central stalk (subunits gamma, delta, and epsilon) rotating inside the F1 region and a stationary peripheral stalk (subunits F6, b, d, and OSCP). Interacts with DNAJC30; interaction is direct.</text>
</comment>
<comment type="subcellular location">
    <subcellularLocation>
        <location>Mitochondrion inner membrane</location>
        <topology>Multi-pass membrane protein</topology>
    </subcellularLocation>
</comment>
<comment type="similarity">
    <text evidence="5">Belongs to the ATPase A chain family.</text>
</comment>
<evidence type="ECO:0000250" key="1">
    <source>
        <dbReference type="UniProtKB" id="P00846"/>
    </source>
</evidence>
<evidence type="ECO:0000255" key="2"/>
<evidence type="ECO:0000269" key="3">
    <source>
    </source>
</evidence>
<evidence type="ECO:0000269" key="4">
    <source>
    </source>
</evidence>
<evidence type="ECO:0000305" key="5"/>
<reference key="1">
    <citation type="journal article" date="2005" name="Mol. Phylogenet. Evol.">
        <title>A phylogeny of the Caniformia (order Carnivora) based on 12 complete protein-coding mitochondrial genes.</title>
        <authorList>
            <person name="Delisle I."/>
            <person name="Strobeck C."/>
        </authorList>
    </citation>
    <scope>NUCLEOTIDE SEQUENCE [GENOMIC DNA]</scope>
    <scope>VARIANT ILE-187</scope>
</reference>
<reference key="2">
    <citation type="journal article" date="2006" name="Genome Res.">
        <title>Relaxation of selective constraint on dog mitochondrial DNA following domestication.</title>
        <authorList>
            <person name="Bjornerfeldt S."/>
            <person name="Webster M.T."/>
            <person name="Vila C."/>
        </authorList>
    </citation>
    <scope>NUCLEOTIDE SEQUENCE [GENOMIC DNA]</scope>
    <scope>VARIANTS GLN-66; ILE-143; ILE-187 AND THR-201</scope>
</reference>
<gene>
    <name evidence="1" type="primary">MT-ATP6</name>
    <name type="synonym">ATP6</name>
    <name type="synonym">ATPASE6</name>
    <name type="synonym">MTATP6</name>
</gene>
<dbReference type="EMBL" id="AY598494">
    <property type="protein sequence ID" value="AAU00440.1"/>
    <property type="molecule type" value="Genomic_DNA"/>
</dbReference>
<dbReference type="EMBL" id="DQ480503">
    <property type="protein sequence ID" value="ABE48160.1"/>
    <property type="molecule type" value="Genomic_DNA"/>
</dbReference>
<dbReference type="EMBL" id="DQ480504">
    <property type="protein sequence ID" value="ABE48173.1"/>
    <property type="molecule type" value="Genomic_DNA"/>
</dbReference>
<dbReference type="EMBL" id="DQ480505">
    <property type="protein sequence ID" value="ABE48186.1"/>
    <property type="molecule type" value="Genomic_DNA"/>
</dbReference>
<dbReference type="EMBL" id="DQ480506">
    <property type="protein sequence ID" value="ABE48199.1"/>
    <property type="molecule type" value="Genomic_DNA"/>
</dbReference>
<dbReference type="EMBL" id="DQ480507">
    <property type="protein sequence ID" value="ABE48212.1"/>
    <property type="molecule type" value="Genomic_DNA"/>
</dbReference>
<dbReference type="EMBL" id="DQ480508">
    <property type="protein sequence ID" value="ABE48225.1"/>
    <property type="molecule type" value="Genomic_DNA"/>
</dbReference>
<dbReference type="RefSeq" id="YP_626733.1">
    <property type="nucleotide sequence ID" value="NC_008092.1"/>
</dbReference>
<dbReference type="SMR" id="Q1HKB1"/>
<dbReference type="GeneID" id="4097769"/>
<dbReference type="CTD" id="4508"/>
<dbReference type="GO" id="GO:0005743">
    <property type="term" value="C:mitochondrial inner membrane"/>
    <property type="evidence" value="ECO:0007669"/>
    <property type="project" value="UniProtKB-SubCell"/>
</dbReference>
<dbReference type="GO" id="GO:0045259">
    <property type="term" value="C:proton-transporting ATP synthase complex"/>
    <property type="evidence" value="ECO:0000250"/>
    <property type="project" value="UniProtKB"/>
</dbReference>
<dbReference type="GO" id="GO:0015252">
    <property type="term" value="F:proton channel activity"/>
    <property type="evidence" value="ECO:0000250"/>
    <property type="project" value="UniProtKB"/>
</dbReference>
<dbReference type="GO" id="GO:0046933">
    <property type="term" value="F:proton-transporting ATP synthase activity, rotational mechanism"/>
    <property type="evidence" value="ECO:0007669"/>
    <property type="project" value="TreeGrafter"/>
</dbReference>
<dbReference type="GO" id="GO:0015986">
    <property type="term" value="P:proton motive force-driven ATP synthesis"/>
    <property type="evidence" value="ECO:0000250"/>
    <property type="project" value="UniProtKB"/>
</dbReference>
<dbReference type="GO" id="GO:1902600">
    <property type="term" value="P:proton transmembrane transport"/>
    <property type="evidence" value="ECO:0000250"/>
    <property type="project" value="UniProtKB"/>
</dbReference>
<dbReference type="CDD" id="cd00310">
    <property type="entry name" value="ATP-synt_Fo_a_6"/>
    <property type="match status" value="1"/>
</dbReference>
<dbReference type="FunFam" id="1.20.120.220:FF:000004">
    <property type="entry name" value="ATP synthase subunit a"/>
    <property type="match status" value="1"/>
</dbReference>
<dbReference type="Gene3D" id="1.20.120.220">
    <property type="entry name" value="ATP synthase, F0 complex, subunit A"/>
    <property type="match status" value="1"/>
</dbReference>
<dbReference type="InterPro" id="IPR000568">
    <property type="entry name" value="ATP_synth_F0_asu"/>
</dbReference>
<dbReference type="InterPro" id="IPR023011">
    <property type="entry name" value="ATP_synth_F0_asu_AS"/>
</dbReference>
<dbReference type="InterPro" id="IPR045083">
    <property type="entry name" value="ATP_synth_F0_asu_bact/mt"/>
</dbReference>
<dbReference type="InterPro" id="IPR035908">
    <property type="entry name" value="F0_ATP_A_sf"/>
</dbReference>
<dbReference type="NCBIfam" id="TIGR01131">
    <property type="entry name" value="ATP_synt_6_or_A"/>
    <property type="match status" value="1"/>
</dbReference>
<dbReference type="PANTHER" id="PTHR11410">
    <property type="entry name" value="ATP SYNTHASE SUBUNIT A"/>
    <property type="match status" value="1"/>
</dbReference>
<dbReference type="PANTHER" id="PTHR11410:SF0">
    <property type="entry name" value="ATP SYNTHASE SUBUNIT A"/>
    <property type="match status" value="1"/>
</dbReference>
<dbReference type="Pfam" id="PF00119">
    <property type="entry name" value="ATP-synt_A"/>
    <property type="match status" value="1"/>
</dbReference>
<dbReference type="PRINTS" id="PR00123">
    <property type="entry name" value="ATPASEA"/>
</dbReference>
<dbReference type="SUPFAM" id="SSF81336">
    <property type="entry name" value="F1F0 ATP synthase subunit A"/>
    <property type="match status" value="1"/>
</dbReference>
<dbReference type="PROSITE" id="PS00449">
    <property type="entry name" value="ATPASE_A"/>
    <property type="match status" value="1"/>
</dbReference>
<organism>
    <name type="scientific">Canis lupus</name>
    <name type="common">Gray wolf</name>
    <dbReference type="NCBI Taxonomy" id="9612"/>
    <lineage>
        <taxon>Eukaryota</taxon>
        <taxon>Metazoa</taxon>
        <taxon>Chordata</taxon>
        <taxon>Craniata</taxon>
        <taxon>Vertebrata</taxon>
        <taxon>Euteleostomi</taxon>
        <taxon>Mammalia</taxon>
        <taxon>Eutheria</taxon>
        <taxon>Laurasiatheria</taxon>
        <taxon>Carnivora</taxon>
        <taxon>Caniformia</taxon>
        <taxon>Canidae</taxon>
        <taxon>Canis</taxon>
    </lineage>
</organism>
<protein>
    <recommendedName>
        <fullName evidence="1">ATP synthase F(0) complex subunit a</fullName>
    </recommendedName>
    <alternativeName>
        <fullName>F-ATPase protein 6</fullName>
    </alternativeName>
    <alternativeName>
        <fullName evidence="1">Proton-conducting channel, ATP synthase F(0) complex subunit a</fullName>
    </alternativeName>
</protein>
<sequence>MNENLFASFAAPSMMGLPIVVLIVMFPSILFPTPSRLINNRLISIQQWLIQLTSKQMLAIHNQKGRTWALMLMSLILFIGSTNLLGLLPHSFTPTTQLSMNLGMAIPLWAGTVITGFRYKTKASLAHFLPQGTPLPLIPMLVVIETISLFIQPMALAVRLTANITAGHLLIHLIGGATLALINISATTAFITFIILILLTILEFAVALIQAYVFTLLVSLYLHDNT</sequence>
<proteinExistence type="inferred from homology"/>
<name>ATP6_CANLU</name>
<accession>Q1HKB1</accession>
<accession>Q1HK98</accession>
<accession>Q1HKF0</accession>
<accession>Q3L6Z4</accession>
<keyword id="KW-0066">ATP synthesis</keyword>
<keyword id="KW-0138">CF(0)</keyword>
<keyword id="KW-0375">Hydrogen ion transport</keyword>
<keyword id="KW-0406">Ion transport</keyword>
<keyword id="KW-0472">Membrane</keyword>
<keyword id="KW-0496">Mitochondrion</keyword>
<keyword id="KW-0999">Mitochondrion inner membrane</keyword>
<keyword id="KW-0812">Transmembrane</keyword>
<keyword id="KW-1133">Transmembrane helix</keyword>
<keyword id="KW-0813">Transport</keyword>
<feature type="chain" id="PRO_0000269706" description="ATP synthase F(0) complex subunit a">
    <location>
        <begin position="1"/>
        <end position="226"/>
    </location>
</feature>
<feature type="transmembrane region" description="Helical" evidence="2">
    <location>
        <begin position="11"/>
        <end position="31"/>
    </location>
</feature>
<feature type="transmembrane region" description="Helical" evidence="2">
    <location>
        <begin position="68"/>
        <end position="88"/>
    </location>
</feature>
<feature type="transmembrane region" description="Helical" evidence="2">
    <location>
        <begin position="97"/>
        <end position="117"/>
    </location>
</feature>
<feature type="transmembrane region" description="Helical" evidence="2">
    <location>
        <begin position="138"/>
        <end position="158"/>
    </location>
</feature>
<feature type="transmembrane region" description="Helical" evidence="2">
    <location>
        <begin position="164"/>
        <end position="184"/>
    </location>
</feature>
<feature type="transmembrane region" description="Helical" evidence="2">
    <location>
        <begin position="189"/>
        <end position="209"/>
    </location>
</feature>
<feature type="sequence variant" evidence="4">
    <original>R</original>
    <variation>Q</variation>
    <location>
        <position position="66"/>
    </location>
</feature>
<feature type="sequence variant" evidence="4">
    <original>V</original>
    <variation>I</variation>
    <location>
        <position position="143"/>
    </location>
</feature>
<feature type="sequence variant" evidence="3 4">
    <original>T</original>
    <variation>I</variation>
    <location>
        <position position="187"/>
    </location>
</feature>
<feature type="sequence variant" evidence="4">
    <original>I</original>
    <variation>T</variation>
    <location>
        <position position="201"/>
    </location>
</feature>